<sequence length="448" mass="51363">MFTVVIVGRPNVGKSTLFNRMIKSDEKIKAITDKFPGVTRDINYGVAKWDDKEFIVVDTGGFFPEEKIEDIIQKQMLEQIEMAISDADLIIHLLDSKEGLLPDDIETARQLRQTGKDILWVVNKIDDPSKLSRIYDFYSIGTEELIPISGITGYGFDELIDKIIEKIPDTQPVNLEQQNLPKIAVVGRPNVGKSTIINALLGKKRMIVSPIPGTTRDTIDAICTYYGKKYLLIDTAGIKRLSYYKKEISQEIYVERLAYFKALRSIERADVAILVIDALEGIVNQDQKIAGIVAEQKKGLIILINKWDLIPANERDKKAKFFTDEIKHKLWFVDYAPYLTVSAIDKTRLTKIFPLIDQILEEYSKRVSTSELNRLFSEKLKDVIMSSHGKELKFYYITQVNVAPPTFVVFVNDQSAVKQHHIKFIEKLLRETFHFKFSPINIKIKQRK</sequence>
<comment type="function">
    <text evidence="1">GTPase that plays an essential role in the late steps of ribosome biogenesis.</text>
</comment>
<comment type="subunit">
    <text evidence="1">Associates with the 50S ribosomal subunit.</text>
</comment>
<comment type="similarity">
    <text evidence="1">Belongs to the TRAFAC class TrmE-Era-EngA-EngB-Septin-like GTPase superfamily. EngA (Der) GTPase family.</text>
</comment>
<proteinExistence type="inferred from homology"/>
<gene>
    <name evidence="1" type="primary">der</name>
    <name type="synonym">engA</name>
    <name type="ordered locus">THEYE_A1376</name>
</gene>
<reference key="1">
    <citation type="submission" date="2008-08" db="EMBL/GenBank/DDBJ databases">
        <title>The complete genome sequence of Thermodesulfovibrio yellowstonii strain ATCC 51303 / DSM 11347 / YP87.</title>
        <authorList>
            <person name="Dodson R.J."/>
            <person name="Durkin A.S."/>
            <person name="Wu M."/>
            <person name="Eisen J."/>
            <person name="Sutton G."/>
        </authorList>
    </citation>
    <scope>NUCLEOTIDE SEQUENCE [LARGE SCALE GENOMIC DNA]</scope>
    <source>
        <strain>ATCC 51303 / DSM 11347 / YP87</strain>
    </source>
</reference>
<organism>
    <name type="scientific">Thermodesulfovibrio yellowstonii (strain ATCC 51303 / DSM 11347 / YP87)</name>
    <dbReference type="NCBI Taxonomy" id="289376"/>
    <lineage>
        <taxon>Bacteria</taxon>
        <taxon>Pseudomonadati</taxon>
        <taxon>Nitrospirota</taxon>
        <taxon>Thermodesulfovibrionia</taxon>
        <taxon>Thermodesulfovibrionales</taxon>
        <taxon>Thermodesulfovibrionaceae</taxon>
        <taxon>Thermodesulfovibrio</taxon>
    </lineage>
</organism>
<protein>
    <recommendedName>
        <fullName evidence="1">GTPase Der</fullName>
    </recommendedName>
    <alternativeName>
        <fullName evidence="1">GTP-binding protein EngA</fullName>
    </alternativeName>
</protein>
<evidence type="ECO:0000255" key="1">
    <source>
        <dbReference type="HAMAP-Rule" id="MF_00195"/>
    </source>
</evidence>
<name>DER_THEYD</name>
<accession>B5YFX9</accession>
<keyword id="KW-0342">GTP-binding</keyword>
<keyword id="KW-0547">Nucleotide-binding</keyword>
<keyword id="KW-1185">Reference proteome</keyword>
<keyword id="KW-0677">Repeat</keyword>
<keyword id="KW-0690">Ribosome biogenesis</keyword>
<dbReference type="EMBL" id="CP001147">
    <property type="protein sequence ID" value="ACI21570.1"/>
    <property type="molecule type" value="Genomic_DNA"/>
</dbReference>
<dbReference type="RefSeq" id="WP_012546282.1">
    <property type="nucleotide sequence ID" value="NC_011296.1"/>
</dbReference>
<dbReference type="RefSeq" id="YP_002249177.1">
    <property type="nucleotide sequence ID" value="NC_011296.1"/>
</dbReference>
<dbReference type="SMR" id="B5YFX9"/>
<dbReference type="FunCoup" id="B5YFX9">
    <property type="interactions" value="445"/>
</dbReference>
<dbReference type="STRING" id="289376.THEYE_A1376"/>
<dbReference type="EnsemblBacteria" id="ACI21570">
    <property type="protein sequence ID" value="ACI21570"/>
    <property type="gene ID" value="THEYE_A1376"/>
</dbReference>
<dbReference type="KEGG" id="tye:THEYE_A1376"/>
<dbReference type="PATRIC" id="fig|289376.4.peg.1338"/>
<dbReference type="eggNOG" id="COG1160">
    <property type="taxonomic scope" value="Bacteria"/>
</dbReference>
<dbReference type="HOGENOM" id="CLU_016077_6_2_0"/>
<dbReference type="InParanoid" id="B5YFX9"/>
<dbReference type="OrthoDB" id="9805918at2"/>
<dbReference type="Proteomes" id="UP000000718">
    <property type="component" value="Chromosome"/>
</dbReference>
<dbReference type="GO" id="GO:0005525">
    <property type="term" value="F:GTP binding"/>
    <property type="evidence" value="ECO:0007669"/>
    <property type="project" value="UniProtKB-UniRule"/>
</dbReference>
<dbReference type="GO" id="GO:0043022">
    <property type="term" value="F:ribosome binding"/>
    <property type="evidence" value="ECO:0000318"/>
    <property type="project" value="GO_Central"/>
</dbReference>
<dbReference type="GO" id="GO:0042254">
    <property type="term" value="P:ribosome biogenesis"/>
    <property type="evidence" value="ECO:0007669"/>
    <property type="project" value="UniProtKB-KW"/>
</dbReference>
<dbReference type="CDD" id="cd01894">
    <property type="entry name" value="EngA1"/>
    <property type="match status" value="1"/>
</dbReference>
<dbReference type="CDD" id="cd01895">
    <property type="entry name" value="EngA2"/>
    <property type="match status" value="1"/>
</dbReference>
<dbReference type="FunFam" id="3.30.300.20:FF:000004">
    <property type="entry name" value="GTPase Der"/>
    <property type="match status" value="1"/>
</dbReference>
<dbReference type="FunFam" id="3.40.50.300:FF:000040">
    <property type="entry name" value="GTPase Der"/>
    <property type="match status" value="1"/>
</dbReference>
<dbReference type="FunFam" id="3.40.50.300:FF:000057">
    <property type="entry name" value="GTPase Der"/>
    <property type="match status" value="1"/>
</dbReference>
<dbReference type="Gene3D" id="3.30.300.20">
    <property type="match status" value="1"/>
</dbReference>
<dbReference type="Gene3D" id="3.40.50.300">
    <property type="entry name" value="P-loop containing nucleotide triphosphate hydrolases"/>
    <property type="match status" value="2"/>
</dbReference>
<dbReference type="HAMAP" id="MF_00195">
    <property type="entry name" value="GTPase_Der"/>
    <property type="match status" value="1"/>
</dbReference>
<dbReference type="InterPro" id="IPR031166">
    <property type="entry name" value="G_ENGA"/>
</dbReference>
<dbReference type="InterPro" id="IPR006073">
    <property type="entry name" value="GTP-bd"/>
</dbReference>
<dbReference type="InterPro" id="IPR016484">
    <property type="entry name" value="GTPase_Der"/>
</dbReference>
<dbReference type="InterPro" id="IPR032859">
    <property type="entry name" value="KH_dom-like"/>
</dbReference>
<dbReference type="InterPro" id="IPR015946">
    <property type="entry name" value="KH_dom-like_a/b"/>
</dbReference>
<dbReference type="InterPro" id="IPR027417">
    <property type="entry name" value="P-loop_NTPase"/>
</dbReference>
<dbReference type="InterPro" id="IPR005225">
    <property type="entry name" value="Small_GTP-bd"/>
</dbReference>
<dbReference type="NCBIfam" id="TIGR03594">
    <property type="entry name" value="GTPase_EngA"/>
    <property type="match status" value="1"/>
</dbReference>
<dbReference type="NCBIfam" id="TIGR00231">
    <property type="entry name" value="small_GTP"/>
    <property type="match status" value="2"/>
</dbReference>
<dbReference type="PANTHER" id="PTHR43834">
    <property type="entry name" value="GTPASE DER"/>
    <property type="match status" value="1"/>
</dbReference>
<dbReference type="PANTHER" id="PTHR43834:SF6">
    <property type="entry name" value="GTPASE DER"/>
    <property type="match status" value="1"/>
</dbReference>
<dbReference type="Pfam" id="PF14714">
    <property type="entry name" value="KH_dom-like"/>
    <property type="match status" value="1"/>
</dbReference>
<dbReference type="Pfam" id="PF01926">
    <property type="entry name" value="MMR_HSR1"/>
    <property type="match status" value="2"/>
</dbReference>
<dbReference type="PIRSF" id="PIRSF006485">
    <property type="entry name" value="GTP-binding_EngA"/>
    <property type="match status" value="1"/>
</dbReference>
<dbReference type="PRINTS" id="PR00326">
    <property type="entry name" value="GTP1OBG"/>
</dbReference>
<dbReference type="SUPFAM" id="SSF52540">
    <property type="entry name" value="P-loop containing nucleoside triphosphate hydrolases"/>
    <property type="match status" value="2"/>
</dbReference>
<dbReference type="PROSITE" id="PS51712">
    <property type="entry name" value="G_ENGA"/>
    <property type="match status" value="2"/>
</dbReference>
<feature type="chain" id="PRO_1000099175" description="GTPase Der">
    <location>
        <begin position="1"/>
        <end position="448"/>
    </location>
</feature>
<feature type="domain" description="EngA-type G 1">
    <location>
        <begin position="2"/>
        <end position="171"/>
    </location>
</feature>
<feature type="domain" description="EngA-type G 2">
    <location>
        <begin position="181"/>
        <end position="364"/>
    </location>
</feature>
<feature type="domain" description="KH-like" evidence="1">
    <location>
        <begin position="365"/>
        <end position="448"/>
    </location>
</feature>
<feature type="binding site" evidence="1">
    <location>
        <begin position="8"/>
        <end position="15"/>
    </location>
    <ligand>
        <name>GTP</name>
        <dbReference type="ChEBI" id="CHEBI:37565"/>
        <label>1</label>
    </ligand>
</feature>
<feature type="binding site" evidence="1">
    <location>
        <begin position="58"/>
        <end position="62"/>
    </location>
    <ligand>
        <name>GTP</name>
        <dbReference type="ChEBI" id="CHEBI:37565"/>
        <label>1</label>
    </ligand>
</feature>
<feature type="binding site" evidence="1">
    <location>
        <begin position="123"/>
        <end position="126"/>
    </location>
    <ligand>
        <name>GTP</name>
        <dbReference type="ChEBI" id="CHEBI:37565"/>
        <label>1</label>
    </ligand>
</feature>
<feature type="binding site" evidence="1">
    <location>
        <begin position="187"/>
        <end position="194"/>
    </location>
    <ligand>
        <name>GTP</name>
        <dbReference type="ChEBI" id="CHEBI:37565"/>
        <label>2</label>
    </ligand>
</feature>
<feature type="binding site" evidence="1">
    <location>
        <begin position="234"/>
        <end position="238"/>
    </location>
    <ligand>
        <name>GTP</name>
        <dbReference type="ChEBI" id="CHEBI:37565"/>
        <label>2</label>
    </ligand>
</feature>
<feature type="binding site" evidence="1">
    <location>
        <begin position="305"/>
        <end position="308"/>
    </location>
    <ligand>
        <name>GTP</name>
        <dbReference type="ChEBI" id="CHEBI:37565"/>
        <label>2</label>
    </ligand>
</feature>